<reference key="1">
    <citation type="journal article" date="1997" name="J. Biol. Chem.">
        <title>Molecular cloning of SKAP55, a novel protein that associates with p59fyn in human T-lymphocytes.</title>
        <authorList>
            <person name="Marie-Cardine A."/>
            <person name="Bruyns E."/>
            <person name="Eckerskorn C."/>
            <person name="Kirchgessner H."/>
            <person name="Meuer S."/>
            <person name="Schraven B."/>
        </authorList>
    </citation>
    <scope>NUCLEOTIDE SEQUENCE [MRNA] (ISOFORM 1)</scope>
    <scope>PROTEIN SEQUENCE OF 101-110; 120-130 AND 153-158</scope>
    <scope>PHOSPHORYLATION</scope>
    <scope>INTERACTION WITH FYN</scope>
    <scope>TISSUE SPECIFICITY</scope>
    <scope>VARIANT SER-161</scope>
    <source>
        <tissue>Blood</tissue>
    </source>
</reference>
<reference key="2">
    <citation type="journal article" date="2006" name="Nature">
        <title>DNA sequence of human chromosome 17 and analysis of rearrangement in the human lineage.</title>
        <authorList>
            <person name="Zody M.C."/>
            <person name="Garber M."/>
            <person name="Adams D.J."/>
            <person name="Sharpe T."/>
            <person name="Harrow J."/>
            <person name="Lupski J.R."/>
            <person name="Nicholson C."/>
            <person name="Searle S.M."/>
            <person name="Wilming L."/>
            <person name="Young S.K."/>
            <person name="Abouelleil A."/>
            <person name="Allen N.R."/>
            <person name="Bi W."/>
            <person name="Bloom T."/>
            <person name="Borowsky M.L."/>
            <person name="Bugalter B.E."/>
            <person name="Butler J."/>
            <person name="Chang J.L."/>
            <person name="Chen C.-K."/>
            <person name="Cook A."/>
            <person name="Corum B."/>
            <person name="Cuomo C.A."/>
            <person name="de Jong P.J."/>
            <person name="DeCaprio D."/>
            <person name="Dewar K."/>
            <person name="FitzGerald M."/>
            <person name="Gilbert J."/>
            <person name="Gibson R."/>
            <person name="Gnerre S."/>
            <person name="Goldstein S."/>
            <person name="Grafham D.V."/>
            <person name="Grocock R."/>
            <person name="Hafez N."/>
            <person name="Hagopian D.S."/>
            <person name="Hart E."/>
            <person name="Norman C.H."/>
            <person name="Humphray S."/>
            <person name="Jaffe D.B."/>
            <person name="Jones M."/>
            <person name="Kamal M."/>
            <person name="Khodiyar V.K."/>
            <person name="LaButti K."/>
            <person name="Laird G."/>
            <person name="Lehoczky J."/>
            <person name="Liu X."/>
            <person name="Lokyitsang T."/>
            <person name="Loveland J."/>
            <person name="Lui A."/>
            <person name="Macdonald P."/>
            <person name="Major J.E."/>
            <person name="Matthews L."/>
            <person name="Mauceli E."/>
            <person name="McCarroll S.A."/>
            <person name="Mihalev A.H."/>
            <person name="Mudge J."/>
            <person name="Nguyen C."/>
            <person name="Nicol R."/>
            <person name="O'Leary S.B."/>
            <person name="Osoegawa K."/>
            <person name="Schwartz D.C."/>
            <person name="Shaw-Smith C."/>
            <person name="Stankiewicz P."/>
            <person name="Steward C."/>
            <person name="Swarbreck D."/>
            <person name="Venkataraman V."/>
            <person name="Whittaker C.A."/>
            <person name="Yang X."/>
            <person name="Zimmer A.R."/>
            <person name="Bradley A."/>
            <person name="Hubbard T."/>
            <person name="Birren B.W."/>
            <person name="Rogers J."/>
            <person name="Lander E.S."/>
            <person name="Nusbaum C."/>
        </authorList>
    </citation>
    <scope>NUCLEOTIDE SEQUENCE [LARGE SCALE GENOMIC DNA]</scope>
</reference>
<reference key="3">
    <citation type="submission" date="2005-09" db="EMBL/GenBank/DDBJ databases">
        <authorList>
            <person name="Mural R.J."/>
            <person name="Istrail S."/>
            <person name="Sutton G.G."/>
            <person name="Florea L."/>
            <person name="Halpern A.L."/>
            <person name="Mobarry C.M."/>
            <person name="Lippert R."/>
            <person name="Walenz B."/>
            <person name="Shatkay H."/>
            <person name="Dew I."/>
            <person name="Miller J.R."/>
            <person name="Flanigan M.J."/>
            <person name="Edwards N.J."/>
            <person name="Bolanos R."/>
            <person name="Fasulo D."/>
            <person name="Halldorsson B.V."/>
            <person name="Hannenhalli S."/>
            <person name="Turner R."/>
            <person name="Yooseph S."/>
            <person name="Lu F."/>
            <person name="Nusskern D.R."/>
            <person name="Shue B.C."/>
            <person name="Zheng X.H."/>
            <person name="Zhong F."/>
            <person name="Delcher A.L."/>
            <person name="Huson D.H."/>
            <person name="Kravitz S.A."/>
            <person name="Mouchard L."/>
            <person name="Reinert K."/>
            <person name="Remington K.A."/>
            <person name="Clark A.G."/>
            <person name="Waterman M.S."/>
            <person name="Eichler E.E."/>
            <person name="Adams M.D."/>
            <person name="Hunkapiller M.W."/>
            <person name="Myers E.W."/>
            <person name="Venter J.C."/>
        </authorList>
    </citation>
    <scope>NUCLEOTIDE SEQUENCE [LARGE SCALE GENOMIC DNA]</scope>
</reference>
<reference key="4">
    <citation type="journal article" date="2004" name="Genome Res.">
        <title>The status, quality, and expansion of the NIH full-length cDNA project: the Mammalian Gene Collection (MGC).</title>
        <authorList>
            <consortium name="The MGC Project Team"/>
        </authorList>
    </citation>
    <scope>NUCLEOTIDE SEQUENCE [LARGE SCALE MRNA] (ISOFORM 2)</scope>
    <source>
        <tissue>Pancreas</tissue>
    </source>
</reference>
<reference key="5">
    <citation type="journal article" date="1998" name="J. Biol. Chem.">
        <title>Molecular interaction between the Fyn-associated protein SKAP55 and the SLP-76-associated phosphoprotein SLAP-130.</title>
        <authorList>
            <person name="Marie-Cardine A."/>
            <person name="Hendricks-Taylor L.R."/>
            <person name="Boerth N.J."/>
            <person name="Zhao H."/>
            <person name="Schraven B."/>
            <person name="Koretzky G.A."/>
        </authorList>
    </citation>
    <scope>INTERACTION WITH FYB1</scope>
    <scope>MUTAGENESIS OF TRP-333</scope>
</reference>
<reference key="6">
    <citation type="journal article" date="1998" name="Proc. Natl. Acad. Sci. U.S.A.">
        <title>FYB (FYN binding protein) serves as a binding partner for lymphoid protein and FYN kinase substrate SKAP55 and a SKAP55-related protein in T cells.</title>
        <authorList>
            <person name="Liu J."/>
            <person name="Kang H."/>
            <person name="Raab M."/>
            <person name="da Silva A.J."/>
            <person name="Kraeft S.-K."/>
            <person name="Rudd C.E."/>
        </authorList>
    </citation>
    <scope>INTERACTION WITH FYB1</scope>
    <scope>SUBCELLULAR LOCATION</scope>
</reference>
<reference key="7">
    <citation type="journal article" date="2000" name="EMBO J.">
        <title>SH3 domain recognition of a proline-independent tyrosine-based RKxxYxxY motif in immune cell adaptor SKAP55.</title>
        <authorList>
            <person name="Kang H."/>
            <person name="Freund C."/>
            <person name="Duke-Cohan J.S."/>
            <person name="Musacchio A."/>
            <person name="Wagner G."/>
            <person name="Rudd C.E."/>
        </authorList>
    </citation>
    <scope>INTERACTION WITH FYB1</scope>
    <scope>MUTAGENESIS OF TYR-295 AND TYR-298</scope>
    <scope>FUNCTION</scope>
</reference>
<reference key="8">
    <citation type="journal article" date="2002" name="J. Biol. Chem.">
        <title>SKAP55 recruits to lipid rafts and positively mediates the MAPK pathway upon T cell receptor activation.</title>
        <authorList>
            <person name="Wu L."/>
            <person name="Yu Z."/>
            <person name="Shen S.-H."/>
        </authorList>
    </citation>
    <scope>HOMODIMERIZATION</scope>
    <scope>MUTAGENESIS OF TYR-219; TYR-232; TYR-271 AND TRP-333</scope>
    <scope>PHOSPHORYLATION</scope>
    <scope>INTERACTION WITH GRB2</scope>
</reference>
<reference key="9">
    <citation type="journal article" date="2002" name="Mol. Cell. Biol.">
        <title>SKAP55 coupled with CD45 positively regulates T-cell receptor-mediated gene transcription.</title>
        <authorList>
            <person name="Wu L."/>
            <person name="Fu J."/>
            <person name="Shen S.-H."/>
        </authorList>
    </citation>
    <scope>PHOSPHORYLATION AT TYR-219 AND TYR-232</scope>
    <scope>DEPHOSPHORYLATION BY PTPRC</scope>
    <scope>MUTAGENESIS OF TYR-219; TYR-232 AND TYR-271</scope>
    <scope>SUBCELLULAR LOCATION</scope>
    <scope>FUNCTION</scope>
    <scope>INTERACTION WITH PTPRC</scope>
</reference>
<reference key="10">
    <citation type="journal article" date="2003" name="Nat. Immunol.">
        <title>SKAP-55 regulates integrin adhesion and formation of T cell-APC conjugates.</title>
        <authorList>
            <person name="Wang H."/>
            <person name="Moon E.-Y."/>
            <person name="Azouz A."/>
            <person name="Wu X."/>
            <person name="Smith A."/>
            <person name="Schneider H."/>
            <person name="Hogg N."/>
            <person name="Rudd C.E."/>
        </authorList>
    </citation>
    <scope>FUNCTION</scope>
    <scope>SUBCELLULAR LOCATION</scope>
</reference>
<reference key="11">
    <citation type="journal article" date="2005" name="J. Biol. Chem.">
        <title>Deficiency of ADAP/Fyb/SLAP-130 destabilizes SKAP55 in Jurkat T cells.</title>
        <authorList>
            <person name="Huang Y."/>
            <person name="Norton D.D."/>
            <person name="Precht P."/>
            <person name="Martindale J.L."/>
            <person name="Burkhardt J.K."/>
            <person name="Wange R.L."/>
        </authorList>
    </citation>
    <scope>INTERACTION WITH FYB1</scope>
    <scope>MUTAGENESIS OF TRP-333</scope>
</reference>
<reference key="12">
    <citation type="journal article" date="2005" name="J. Exp. Med.">
        <title>An essential role for SKAP-55 in LFA-1 clustering on T cells that cannot be substituted by SKAP-55R.</title>
        <authorList>
            <person name="Jo E.-K."/>
            <person name="Wang H."/>
            <person name="Rudd C.E."/>
        </authorList>
    </citation>
    <scope>FUNCTION</scope>
</reference>
<reference key="13">
    <citation type="journal article" date="2006" name="J. Biol. Chem.">
        <title>Regulation and function of SKAP-55 non-canonical motif binding to the SH3c domain of adhesion and degranulation-promoting adaptor protein.</title>
        <authorList>
            <person name="Duke-Cohan J.S."/>
            <person name="Kang H."/>
            <person name="Liu H."/>
            <person name="Rudd C.E."/>
        </authorList>
    </citation>
    <scope>PHOSPHORYLATION</scope>
    <scope>INTERACTION WITH FYB1</scope>
</reference>
<reference key="14">
    <citation type="journal article" date="2006" name="Mol. Cell. Biol.">
        <title>The ADAP/SKAP55 signaling module regulates T-cell receptor-mediated integrin activation through plasma membrane targeting of Rap1.</title>
        <authorList>
            <person name="Kliche S."/>
            <person name="Breitling D."/>
            <person name="Togni M."/>
            <person name="Pusch R."/>
            <person name="Heuer K."/>
            <person name="Wang X."/>
            <person name="Freund C."/>
            <person name="Kasirer-Friede A."/>
            <person name="Menasche G."/>
            <person name="Koretzky G.A."/>
            <person name="Schraven B."/>
        </authorList>
    </citation>
    <scope>FUNCTION</scope>
</reference>
<reference key="15">
    <citation type="journal article" date="2008" name="Mol. Immunol.">
        <title>SKAP55 modulates T cell antigen receptor-induced activation of the Ras-Erk-AP1 pathway by binding RasGRP1.</title>
        <authorList>
            <person name="Kosco K.A."/>
            <person name="Cerignoli F."/>
            <person name="Williams S."/>
            <person name="Abraham R.T."/>
            <person name="Mustelin T."/>
        </authorList>
    </citation>
    <scope>INTERACTION WITH RASGRP1</scope>
</reference>
<reference key="16">
    <citation type="journal article" date="2009" name="Sci. Signal.">
        <title>Quantitative phosphoproteomic analysis of T cell receptor signaling reveals system-wide modulation of protein-protein interactions.</title>
        <authorList>
            <person name="Mayya V."/>
            <person name="Lundgren D.H."/>
            <person name="Hwang S.-I."/>
            <person name="Rezaul K."/>
            <person name="Wu L."/>
            <person name="Eng J.K."/>
            <person name="Rodionov V."/>
            <person name="Han D.K."/>
        </authorList>
    </citation>
    <scope>PHOSPHORYLATION [LARGE SCALE ANALYSIS] AT TYR-271</scope>
    <scope>IDENTIFICATION BY MASS SPECTROMETRY [LARGE SCALE ANALYSIS]</scope>
    <source>
        <tissue>Leukemic T-cell</tissue>
    </source>
</reference>
<reference key="17">
    <citation type="journal article" date="2016" name="J. Immunol.">
        <title>ARAP, a novel adaptor protein, is required for TCR signaling and integrin-mediated adhesion.</title>
        <authorList>
            <person name="Jung S.H."/>
            <person name="Yoo E.H."/>
            <person name="Yu M.J."/>
            <person name="Song H.M."/>
            <person name="Kang H.Y."/>
            <person name="Cho J.Y."/>
            <person name="Lee J.R."/>
        </authorList>
    </citation>
    <scope>INTERACTION WITH FYB2 AND FYB1</scope>
</reference>
<reference key="18">
    <citation type="submission" date="2005-07" db="PDB data bank">
        <title>Structural basis for the dimerization and phosphoinositide specificity of the Src kinase-associated phosphoproteins SKAP55 and SKAP-HOM.</title>
        <authorList>
            <person name="Tang Y."/>
            <person name="Swanson K.D."/>
            <person name="Neel B.G."/>
            <person name="Eck M.J."/>
        </authorList>
    </citation>
    <scope>X-RAY CRYSTALLOGRAPHY (1.7 ANGSTROMS) OF 108-213</scope>
</reference>
<organism>
    <name type="scientific">Homo sapiens</name>
    <name type="common">Human</name>
    <dbReference type="NCBI Taxonomy" id="9606"/>
    <lineage>
        <taxon>Eukaryota</taxon>
        <taxon>Metazoa</taxon>
        <taxon>Chordata</taxon>
        <taxon>Craniata</taxon>
        <taxon>Vertebrata</taxon>
        <taxon>Euteleostomi</taxon>
        <taxon>Mammalia</taxon>
        <taxon>Eutheria</taxon>
        <taxon>Euarchontoglires</taxon>
        <taxon>Primates</taxon>
        <taxon>Haplorrhini</taxon>
        <taxon>Catarrhini</taxon>
        <taxon>Hominidae</taxon>
        <taxon>Homo</taxon>
    </lineage>
</organism>
<name>SKAP1_HUMAN</name>
<sequence length="359" mass="41432">MQAAALPEEIRWLLEDAEEFLAEGLRNENLSAVARDHRDHILRGFQQIKARYYWDFQPQGGDIGQDSSDDNHSGTLGLSLTSDAPFLSDYQDEGMEDIVKGAQELDNVIKQGYLEKKSKDHSFFGSEWQKRWCVVSRGLFYYYANEKSKQPKGTFLIKGYGVRMAPHLRRDSKKESCFELTSQDRRSYEFTATSPAEARDWVDQISFLLKDLSSLTIPYEEDEEEEEKEETYDDIDGFDSPSCGSQCRPTILPGSVGIKEPTEEKEEEDIYEVLPDEEHDLEEDESGTRRKGVDYASYYQGLWDCHGDQPDELSFQRGDLIRILSKEYNMYGWWVGELNSLVGIVPKEYLTTAFEVEER</sequence>
<protein>
    <recommendedName>
        <fullName>Src kinase-associated phosphoprotein 1</fullName>
    </recommendedName>
    <alternativeName>
        <fullName>Src family-associated phosphoprotein 1</fullName>
    </alternativeName>
    <alternativeName>
        <fullName>Src kinase-associated phosphoprotein of 55 kDa</fullName>
        <shortName>SKAP-55</shortName>
        <shortName>pp55</shortName>
    </alternativeName>
</protein>
<keyword id="KW-0002">3D-structure</keyword>
<keyword id="KW-1064">Adaptive immunity</keyword>
<keyword id="KW-0025">Alternative splicing</keyword>
<keyword id="KW-1003">Cell membrane</keyword>
<keyword id="KW-0963">Cytoplasm</keyword>
<keyword id="KW-0903">Direct protein sequencing</keyword>
<keyword id="KW-0391">Immunity</keyword>
<keyword id="KW-0472">Membrane</keyword>
<keyword id="KW-0539">Nucleus</keyword>
<keyword id="KW-0597">Phosphoprotein</keyword>
<keyword id="KW-1267">Proteomics identification</keyword>
<keyword id="KW-1185">Reference proteome</keyword>
<keyword id="KW-0728">SH3 domain</keyword>
<gene>
    <name type="primary">SKAP1</name>
    <name type="synonym">SCAP1</name>
    <name type="synonym">SKAP55</name>
</gene>
<proteinExistence type="evidence at protein level"/>
<evidence type="ECO:0000250" key="1">
    <source>
        <dbReference type="UniProtKB" id="Q3UUV5"/>
    </source>
</evidence>
<evidence type="ECO:0000250" key="2">
    <source>
        <dbReference type="UniProtKB" id="Q4V7G1"/>
    </source>
</evidence>
<evidence type="ECO:0000255" key="3">
    <source>
        <dbReference type="PROSITE-ProRule" id="PRU00145"/>
    </source>
</evidence>
<evidence type="ECO:0000255" key="4">
    <source>
        <dbReference type="PROSITE-ProRule" id="PRU00192"/>
    </source>
</evidence>
<evidence type="ECO:0000256" key="5">
    <source>
        <dbReference type="SAM" id="MobiDB-lite"/>
    </source>
</evidence>
<evidence type="ECO:0000269" key="6">
    <source>
    </source>
</evidence>
<evidence type="ECO:0000269" key="7">
    <source>
    </source>
</evidence>
<evidence type="ECO:0000269" key="8">
    <source>
    </source>
</evidence>
<evidence type="ECO:0000269" key="9">
    <source>
    </source>
</evidence>
<evidence type="ECO:0000269" key="10">
    <source>
    </source>
</evidence>
<evidence type="ECO:0000269" key="11">
    <source>
    </source>
</evidence>
<evidence type="ECO:0000269" key="12">
    <source>
    </source>
</evidence>
<evidence type="ECO:0000269" key="13">
    <source>
    </source>
</evidence>
<evidence type="ECO:0000269" key="14">
    <source>
    </source>
</evidence>
<evidence type="ECO:0000269" key="15">
    <source>
    </source>
</evidence>
<evidence type="ECO:0000269" key="16">
    <source>
    </source>
</evidence>
<evidence type="ECO:0000269" key="17">
    <source>
    </source>
</evidence>
<evidence type="ECO:0000269" key="18">
    <source>
    </source>
</evidence>
<evidence type="ECO:0000303" key="19">
    <source>
    </source>
</evidence>
<evidence type="ECO:0000305" key="20"/>
<evidence type="ECO:0000305" key="21">
    <source>
    </source>
</evidence>
<evidence type="ECO:0000305" key="22">
    <source>
    </source>
</evidence>
<evidence type="ECO:0000305" key="23">
    <source>
    </source>
</evidence>
<evidence type="ECO:0000305" key="24">
    <source>
    </source>
</evidence>
<evidence type="ECO:0007744" key="25">
    <source>
    </source>
</evidence>
<evidence type="ECO:0007829" key="26">
    <source>
        <dbReference type="PDB" id="1U5D"/>
    </source>
</evidence>
<comment type="function">
    <text evidence="6 7 9 11 13">Positively regulates T-cell receptor signaling by enhancing the MAP kinase pathway. Required for optimal conjugation between T-cells and antigen-presenting cells by promoting the clustering of integrin ITGAL on the surface of T-cells. May be involved in high affinity immunoglobulin epsilon receptor signaling in mast cells.</text>
</comment>
<comment type="subunit">
    <text evidence="2 6 7 8 10 12 14 15 16 17 18">Homodimer (PubMed:9195899). Interacts with FYN (PubMed:9195899). Interacts with PTPRC (PubMed:11909961). Interacts with GRB2 when phosphorylated on Tyr-271 (PubMed:12171928). Interacts with FYB1, which is required for SKAP2 protein stability (PubMed:10856234, PubMed:15849195, PubMed:16461356, PubMed:27335501, PubMed:9671755, PubMed:9748251). Part of a complex consisting of SKAP1, FYB1 and CLNK (By similarity). Interacts with RASGRP1 (PubMed:17658605). Interacts with FYB2 (PubMed:27335501).</text>
</comment>
<comment type="interaction">
    <interactant intactId="EBI-2477305">
        <id>Q86WV1</id>
    </interactant>
    <interactant intactId="EBI-3895726">
        <id>P62952</id>
        <label>BLCAP</label>
    </interactant>
    <organismsDiffer>false</organismsDiffer>
    <experiments>3</experiments>
</comment>
<comment type="interaction">
    <interactant intactId="EBI-2477305">
        <id>Q86WV1</id>
    </interactant>
    <interactant intactId="EBI-10246318">
        <id>Q5T9C2</id>
        <label>EEIG1</label>
    </interactant>
    <organismsDiffer>false</organismsDiffer>
    <experiments>4</experiments>
</comment>
<comment type="interaction">
    <interactant intactId="EBI-2477305">
        <id>Q86WV1</id>
    </interactant>
    <interactant intactId="EBI-1753267">
        <id>O15117</id>
        <label>FYB1</label>
    </interactant>
    <organismsDiffer>false</organismsDiffer>
    <experiments>6</experiments>
</comment>
<comment type="interaction">
    <interactant intactId="EBI-2477305">
        <id>Q86WV1</id>
    </interactant>
    <interactant intactId="EBI-2860740">
        <id>Q96QH2</id>
        <label>PRAM1</label>
    </interactant>
    <organismsDiffer>false</organismsDiffer>
    <experiments>4</experiments>
</comment>
<comment type="interaction">
    <interactant intactId="EBI-2477305">
        <id>Q86WV1</id>
    </interactant>
    <interactant intactId="EBI-747035">
        <id>Q9H788</id>
        <label>SH2D4A</label>
    </interactant>
    <organismsDiffer>false</organismsDiffer>
    <experiments>3</experiments>
</comment>
<comment type="interaction">
    <interactant intactId="EBI-2477305">
        <id>Q86WV1</id>
    </interactant>
    <interactant intactId="EBI-10308083">
        <id>Q9H788-2</id>
        <label>SH2D4A</label>
    </interactant>
    <organismsDiffer>false</organismsDiffer>
    <experiments>3</experiments>
</comment>
<comment type="interaction">
    <interactant intactId="EBI-11995314">
        <id>Q86WV1-2</id>
    </interactant>
    <interactant intactId="EBI-523958">
        <id>P55210</id>
        <label>CASP7</label>
    </interactant>
    <organismsDiffer>false</organismsDiffer>
    <experiments>3</experiments>
</comment>
<comment type="interaction">
    <interactant intactId="EBI-11995314">
        <id>Q86WV1-2</id>
    </interactant>
    <interactant intactId="EBI-395883">
        <id>P07237</id>
        <label>P4HB</label>
    </interactant>
    <organismsDiffer>false</organismsDiffer>
    <experiments>3</experiments>
</comment>
<comment type="interaction">
    <interactant intactId="EBI-11995314">
        <id>Q86WV1-2</id>
    </interactant>
    <interactant intactId="EBI-12188331">
        <id>P60201-2</id>
        <label>PLP1</label>
    </interactant>
    <organismsDiffer>false</organismsDiffer>
    <experiments>3</experiments>
</comment>
<comment type="interaction">
    <interactant intactId="EBI-11995314">
        <id>Q86WV1-2</id>
    </interactant>
    <interactant intactId="EBI-2860740">
        <id>Q96QH2</id>
        <label>PRAM1</label>
    </interactant>
    <organismsDiffer>false</organismsDiffer>
    <experiments>3</experiments>
</comment>
<comment type="interaction">
    <interactant intactId="EBI-11995314">
        <id>Q86WV1-2</id>
    </interactant>
    <interactant intactId="EBI-25892254">
        <id>Q9P1I4</id>
        <label>ST13</label>
    </interactant>
    <organismsDiffer>false</organismsDiffer>
    <experiments>3</experiments>
</comment>
<comment type="subcellular location">
    <subcellularLocation>
        <location evidence="7 17">Cytoplasm</location>
    </subcellularLocation>
    <subcellularLocation>
        <location evidence="7 17">Nucleus</location>
    </subcellularLocation>
    <subcellularLocation>
        <location evidence="7 17">Cell membrane</location>
    </subcellularLocation>
    <text evidence="17">Upon T-cell stimulation, translocates to lipid rafts at the cell membrane.</text>
</comment>
<comment type="alternative products">
    <event type="alternative splicing"/>
    <isoform>
        <id>Q86WV1-1</id>
        <name>1</name>
        <sequence type="displayed"/>
    </isoform>
    <isoform>
        <id>Q86WV1-2</id>
        <name>2</name>
        <sequence type="described" ref="VSP_022179"/>
    </isoform>
</comment>
<comment type="tissue specificity">
    <text evidence="16">Highly expressed in thymocytes and peripheral blood lymphocytes. Also expressed in spleen cells and testis. Present in T-cells (at protein level).</text>
</comment>
<comment type="domain">
    <text>The SH3 domain interacts with FYB1.</text>
</comment>
<comment type="PTM">
    <text evidence="21 22 23 24">Phosphorylated on tyrosines. Phosphorylation by FYN on Tyr-271 is required for GRB2 interaction. Phosphorylation by FYN on Tyr-295 abolishes interaction with FYB1. Tyr-232 is dephosphorylated by PTPRC (Probable).</text>
</comment>
<comment type="similarity">
    <text evidence="20">Belongs to the SKAP family.</text>
</comment>
<accession>Q86WV1</accession>
<accession>D3DTV1</accession>
<accession>O15268</accession>
<feature type="chain" id="PRO_0000270173" description="Src kinase-associated phosphoprotein 1">
    <location>
        <begin position="1"/>
        <end position="359"/>
    </location>
</feature>
<feature type="domain" description="PH" evidence="3">
    <location>
        <begin position="107"/>
        <end position="210"/>
    </location>
</feature>
<feature type="domain" description="SH3" evidence="4">
    <location>
        <begin position="294"/>
        <end position="355"/>
    </location>
</feature>
<feature type="region of interest" description="Disordered" evidence="5">
    <location>
        <begin position="219"/>
        <end position="239"/>
    </location>
</feature>
<feature type="region of interest" description="Interaction with FYB1">
    <location>
        <begin position="290"/>
        <end position="295"/>
    </location>
</feature>
<feature type="compositionally biased region" description="Acidic residues" evidence="5">
    <location>
        <begin position="219"/>
        <end position="237"/>
    </location>
</feature>
<feature type="modified residue" description="Phosphotyrosine" evidence="1">
    <location>
        <position position="142"/>
    </location>
</feature>
<feature type="modified residue" description="Phosphotyrosine" evidence="21">
    <location>
        <position position="219"/>
    </location>
</feature>
<feature type="modified residue" description="Phosphotyrosine" evidence="21">
    <location>
        <position position="232"/>
    </location>
</feature>
<feature type="modified residue" description="Phosphotyrosine; by FYN" evidence="25">
    <location>
        <position position="271"/>
    </location>
</feature>
<feature type="modified residue" description="Phosphotyrosine; by FYN" evidence="20">
    <location>
        <position position="295"/>
    </location>
</feature>
<feature type="splice variant" id="VSP_022179" description="In isoform 2." evidence="19">
    <location>
        <position position="293"/>
    </location>
</feature>
<feature type="sequence variant" id="VAR_029811" description="In dbSNP:rs2278868." evidence="16">
    <original>G</original>
    <variation>S</variation>
    <location>
        <position position="161"/>
    </location>
</feature>
<feature type="sequence variant" id="VAR_035343" description="In dbSNP:rs35288886.">
    <original>S</original>
    <variation>G</variation>
    <location>
        <position position="242"/>
    </location>
</feature>
<feature type="mutagenesis site" description="Impairs interaction with PTPRC. No effect on interaction with FYN or GRB2." evidence="7 8">
    <original>Y</original>
    <variation>F</variation>
    <location>
        <position position="219"/>
    </location>
</feature>
<feature type="mutagenesis site" description="Abolishes interaction with PTPRC, translocation to cell membrane upon T-cell stimulation and activation of the MAP kinase pathway. No effect on interaction with FYN or GRB2." evidence="7 8">
    <original>Y</original>
    <variation>F</variation>
    <location>
        <position position="232"/>
    </location>
</feature>
<feature type="mutagenesis site" description="No effect on interaction with PTPRC and translocation to cell membrane upon T-cell stimulation. Abolishes interaction with FYN and GRB2 and activation of the MAP kinase pathway." evidence="7 8">
    <original>Y</original>
    <variation>F</variation>
    <location>
        <position position="271"/>
    </location>
</feature>
<feature type="mutagenesis site" description="Abolishes FYB1-dependent activation of ITGAL clustering." evidence="6">
    <original>Y</original>
    <variation>F</variation>
    <location>
        <position position="295"/>
    </location>
</feature>
<feature type="mutagenesis site" description="Impairs interaction with FYB1." evidence="6">
    <original>Y</original>
    <variation>F</variation>
    <location>
        <position position="298"/>
    </location>
</feature>
<feature type="mutagenesis site" description="Abolishes homodimerization, interaction with FYB1 and activation of the MAP kinase pathway." evidence="8 10 18">
    <original>W</original>
    <variation>R</variation>
    <location>
        <position position="333"/>
    </location>
</feature>
<feature type="sequence conflict" description="In Ref. 1; CAA72101." evidence="20" ref="1">
    <original>S</original>
    <variation>T</variation>
    <location>
        <position position="187"/>
    </location>
</feature>
<feature type="strand" evidence="26">
    <location>
        <begin position="108"/>
        <end position="119"/>
    </location>
</feature>
<feature type="strand" evidence="26">
    <location>
        <begin position="121"/>
        <end position="124"/>
    </location>
</feature>
<feature type="strand" evidence="26">
    <location>
        <begin position="126"/>
        <end position="136"/>
    </location>
</feature>
<feature type="strand" evidence="26">
    <location>
        <begin position="139"/>
        <end position="145"/>
    </location>
</feature>
<feature type="strand" evidence="26">
    <location>
        <begin position="152"/>
        <end position="156"/>
    </location>
</feature>
<feature type="strand" evidence="26">
    <location>
        <begin position="161"/>
        <end position="164"/>
    </location>
</feature>
<feature type="helix" evidence="26">
    <location>
        <begin position="166"/>
        <end position="168"/>
    </location>
</feature>
<feature type="helix" evidence="26">
    <location>
        <begin position="172"/>
        <end position="176"/>
    </location>
</feature>
<feature type="strand" evidence="26">
    <location>
        <begin position="177"/>
        <end position="181"/>
    </location>
</feature>
<feature type="strand" evidence="26">
    <location>
        <begin position="183"/>
        <end position="185"/>
    </location>
</feature>
<feature type="strand" evidence="26">
    <location>
        <begin position="188"/>
        <end position="191"/>
    </location>
</feature>
<feature type="helix" evidence="26">
    <location>
        <begin position="195"/>
        <end position="212"/>
    </location>
</feature>
<dbReference type="EMBL" id="Y11215">
    <property type="protein sequence ID" value="CAA72101.1"/>
    <property type="molecule type" value="mRNA"/>
</dbReference>
<dbReference type="EMBL" id="AC006468">
    <property type="status" value="NOT_ANNOTATED_CDS"/>
    <property type="molecule type" value="Genomic_DNA"/>
</dbReference>
<dbReference type="EMBL" id="AC027152">
    <property type="status" value="NOT_ANNOTATED_CDS"/>
    <property type="molecule type" value="Genomic_DNA"/>
</dbReference>
<dbReference type="EMBL" id="AC036222">
    <property type="status" value="NOT_ANNOTATED_CDS"/>
    <property type="molecule type" value="Genomic_DNA"/>
</dbReference>
<dbReference type="EMBL" id="AC090627">
    <property type="status" value="NOT_ANNOTATED_CDS"/>
    <property type="molecule type" value="Genomic_DNA"/>
</dbReference>
<dbReference type="EMBL" id="CH471109">
    <property type="protein sequence ID" value="EAW94749.1"/>
    <property type="molecule type" value="Genomic_DNA"/>
</dbReference>
<dbReference type="EMBL" id="CH471109">
    <property type="protein sequence ID" value="EAW94750.1"/>
    <property type="molecule type" value="Genomic_DNA"/>
</dbReference>
<dbReference type="EMBL" id="BC047870">
    <property type="protein sequence ID" value="AAH47870.1"/>
    <property type="molecule type" value="mRNA"/>
</dbReference>
<dbReference type="CCDS" id="CCDS32674.1">
    <molecule id="Q86WV1-1"/>
</dbReference>
<dbReference type="RefSeq" id="NP_001068567.1">
    <molecule id="Q86WV1-2"/>
    <property type="nucleotide sequence ID" value="NM_001075099.2"/>
</dbReference>
<dbReference type="RefSeq" id="NP_003717.3">
    <molecule id="Q86WV1-1"/>
    <property type="nucleotide sequence ID" value="NM_003726.3"/>
</dbReference>
<dbReference type="PDB" id="1U5D">
    <property type="method" value="X-ray"/>
    <property type="resolution" value="1.70 A"/>
    <property type="chains" value="A/B/C/D=108-213"/>
</dbReference>
<dbReference type="PDBsum" id="1U5D"/>
<dbReference type="SMR" id="Q86WV1"/>
<dbReference type="BioGRID" id="114184">
    <property type="interactions" value="103"/>
</dbReference>
<dbReference type="FunCoup" id="Q86WV1">
    <property type="interactions" value="1079"/>
</dbReference>
<dbReference type="IntAct" id="Q86WV1">
    <property type="interactions" value="69"/>
</dbReference>
<dbReference type="MINT" id="Q86WV1"/>
<dbReference type="STRING" id="9606.ENSP00000338171"/>
<dbReference type="GlyGen" id="Q86WV1">
    <property type="glycosylation" value="1 site, 1 O-linked glycan (1 site)"/>
</dbReference>
<dbReference type="iPTMnet" id="Q86WV1"/>
<dbReference type="PhosphoSitePlus" id="Q86WV1"/>
<dbReference type="BioMuta" id="SKAP1"/>
<dbReference type="DMDM" id="269849660"/>
<dbReference type="MassIVE" id="Q86WV1"/>
<dbReference type="PaxDb" id="9606-ENSP00000338171"/>
<dbReference type="PeptideAtlas" id="Q86WV1"/>
<dbReference type="ProteomicsDB" id="70207">
    <molecule id="Q86WV1-1"/>
</dbReference>
<dbReference type="ProteomicsDB" id="70208">
    <molecule id="Q86WV1-2"/>
</dbReference>
<dbReference type="Antibodypedia" id="1187">
    <property type="antibodies" value="249 antibodies from 31 providers"/>
</dbReference>
<dbReference type="DNASU" id="8631"/>
<dbReference type="Ensembl" id="ENST00000336915.11">
    <molecule id="Q86WV1-1"/>
    <property type="protein sequence ID" value="ENSP00000338171.6"/>
    <property type="gene ID" value="ENSG00000141293.17"/>
</dbReference>
<dbReference type="Ensembl" id="ENST00000584924.5">
    <molecule id="Q86WV1-1"/>
    <property type="protein sequence ID" value="ENSP00000464311.1"/>
    <property type="gene ID" value="ENSG00000141293.17"/>
</dbReference>
<dbReference type="GeneID" id="8631"/>
<dbReference type="KEGG" id="hsa:8631"/>
<dbReference type="MANE-Select" id="ENST00000336915.11">
    <property type="protein sequence ID" value="ENSP00000338171.6"/>
    <property type="RefSeq nucleotide sequence ID" value="NM_003726.4"/>
    <property type="RefSeq protein sequence ID" value="NP_003717.3"/>
</dbReference>
<dbReference type="UCSC" id="uc002ini.2">
    <molecule id="Q86WV1-1"/>
    <property type="organism name" value="human"/>
</dbReference>
<dbReference type="AGR" id="HGNC:15605"/>
<dbReference type="CTD" id="8631"/>
<dbReference type="DisGeNET" id="8631"/>
<dbReference type="GeneCards" id="SKAP1"/>
<dbReference type="HGNC" id="HGNC:15605">
    <property type="gene designation" value="SKAP1"/>
</dbReference>
<dbReference type="HPA" id="ENSG00000141293">
    <property type="expression patterns" value="Tissue enhanced (lymphoid)"/>
</dbReference>
<dbReference type="MIM" id="604969">
    <property type="type" value="gene"/>
</dbReference>
<dbReference type="neXtProt" id="NX_Q86WV1"/>
<dbReference type="OpenTargets" id="ENSG00000141293"/>
<dbReference type="PharmGKB" id="PA162403362"/>
<dbReference type="VEuPathDB" id="HostDB:ENSG00000141293"/>
<dbReference type="eggNOG" id="ENOG502QSSU">
    <property type="taxonomic scope" value="Eukaryota"/>
</dbReference>
<dbReference type="GeneTree" id="ENSGT00390000017856"/>
<dbReference type="HOGENOM" id="CLU_062032_0_0_1"/>
<dbReference type="InParanoid" id="Q86WV1"/>
<dbReference type="OMA" id="NYYQGMW"/>
<dbReference type="OrthoDB" id="243840at2759"/>
<dbReference type="PAN-GO" id="Q86WV1">
    <property type="GO annotations" value="2 GO annotations based on evolutionary models"/>
</dbReference>
<dbReference type="PhylomeDB" id="Q86WV1"/>
<dbReference type="TreeFam" id="TF331055"/>
<dbReference type="PathwayCommons" id="Q86WV1"/>
<dbReference type="SignaLink" id="Q86WV1"/>
<dbReference type="SIGNOR" id="Q86WV1"/>
<dbReference type="BioGRID-ORCS" id="8631">
    <property type="hits" value="22 hits in 1153 CRISPR screens"/>
</dbReference>
<dbReference type="ChiTaRS" id="SKAP1">
    <property type="organism name" value="human"/>
</dbReference>
<dbReference type="EvolutionaryTrace" id="Q86WV1"/>
<dbReference type="GeneWiki" id="SKAP1"/>
<dbReference type="GenomeRNAi" id="8631"/>
<dbReference type="Pharos" id="Q86WV1">
    <property type="development level" value="Tbio"/>
</dbReference>
<dbReference type="PRO" id="PR:Q86WV1"/>
<dbReference type="Proteomes" id="UP000005640">
    <property type="component" value="Chromosome 17"/>
</dbReference>
<dbReference type="RNAct" id="Q86WV1">
    <property type="molecule type" value="protein"/>
</dbReference>
<dbReference type="Bgee" id="ENSG00000141293">
    <property type="expression patterns" value="Expressed in granulocyte and 125 other cell types or tissues"/>
</dbReference>
<dbReference type="ExpressionAtlas" id="Q86WV1">
    <property type="expression patterns" value="baseline and differential"/>
</dbReference>
<dbReference type="GO" id="GO:0005911">
    <property type="term" value="C:cell-cell junction"/>
    <property type="evidence" value="ECO:0007669"/>
    <property type="project" value="Ensembl"/>
</dbReference>
<dbReference type="GO" id="GO:0005737">
    <property type="term" value="C:cytoplasm"/>
    <property type="evidence" value="ECO:0000314"/>
    <property type="project" value="UniProtKB"/>
</dbReference>
<dbReference type="GO" id="GO:0005829">
    <property type="term" value="C:cytosol"/>
    <property type="evidence" value="ECO:0000314"/>
    <property type="project" value="HPA"/>
</dbReference>
<dbReference type="GO" id="GO:0001772">
    <property type="term" value="C:immunological synapse"/>
    <property type="evidence" value="ECO:0000314"/>
    <property type="project" value="BHF-UCL"/>
</dbReference>
<dbReference type="GO" id="GO:0005654">
    <property type="term" value="C:nucleoplasm"/>
    <property type="evidence" value="ECO:0000314"/>
    <property type="project" value="HPA"/>
</dbReference>
<dbReference type="GO" id="GO:0005886">
    <property type="term" value="C:plasma membrane"/>
    <property type="evidence" value="ECO:0000314"/>
    <property type="project" value="HPA"/>
</dbReference>
<dbReference type="GO" id="GO:0044853">
    <property type="term" value="C:plasma membrane raft"/>
    <property type="evidence" value="ECO:0000314"/>
    <property type="project" value="BHF-UCL"/>
</dbReference>
<dbReference type="GO" id="GO:0042101">
    <property type="term" value="C:T cell receptor complex"/>
    <property type="evidence" value="ECO:0007669"/>
    <property type="project" value="Ensembl"/>
</dbReference>
<dbReference type="GO" id="GO:0019901">
    <property type="term" value="F:protein kinase binding"/>
    <property type="evidence" value="ECO:0000353"/>
    <property type="project" value="UniProtKB"/>
</dbReference>
<dbReference type="GO" id="GO:0019903">
    <property type="term" value="F:protein phosphatase binding"/>
    <property type="evidence" value="ECO:0000353"/>
    <property type="project" value="UniProtKB"/>
</dbReference>
<dbReference type="GO" id="GO:0042169">
    <property type="term" value="F:SH2 domain binding"/>
    <property type="evidence" value="ECO:0000314"/>
    <property type="project" value="UniProtKB"/>
</dbReference>
<dbReference type="GO" id="GO:0017124">
    <property type="term" value="F:SH3 domain binding"/>
    <property type="evidence" value="ECO:0000304"/>
    <property type="project" value="BHF-UCL"/>
</dbReference>
<dbReference type="GO" id="GO:0002250">
    <property type="term" value="P:adaptive immune response"/>
    <property type="evidence" value="ECO:0007669"/>
    <property type="project" value="UniProtKB-KW"/>
</dbReference>
<dbReference type="GO" id="GO:0002821">
    <property type="term" value="P:positive regulation of adaptive immune response"/>
    <property type="evidence" value="ECO:0000314"/>
    <property type="project" value="BHF-UCL"/>
</dbReference>
<dbReference type="GO" id="GO:0033634">
    <property type="term" value="P:positive regulation of cell-cell adhesion mediated by integrin"/>
    <property type="evidence" value="ECO:0000316"/>
    <property type="project" value="BHF-UCL"/>
</dbReference>
<dbReference type="GO" id="GO:0001954">
    <property type="term" value="P:positive regulation of cell-matrix adhesion"/>
    <property type="evidence" value="ECO:0000316"/>
    <property type="project" value="BHF-UCL"/>
</dbReference>
<dbReference type="GO" id="GO:0045893">
    <property type="term" value="P:positive regulation of DNA-templated transcription"/>
    <property type="evidence" value="ECO:0000315"/>
    <property type="project" value="UniProtKB"/>
</dbReference>
<dbReference type="GO" id="GO:0034116">
    <property type="term" value="P:positive regulation of heterotypic cell-cell adhesion"/>
    <property type="evidence" value="ECO:0000314"/>
    <property type="project" value="BHF-UCL"/>
</dbReference>
<dbReference type="GO" id="GO:0033625">
    <property type="term" value="P:positive regulation of integrin activation"/>
    <property type="evidence" value="ECO:0000314"/>
    <property type="project" value="BHF-UCL"/>
</dbReference>
<dbReference type="GO" id="GO:1903039">
    <property type="term" value="P:positive regulation of leukocyte cell-cell adhesion"/>
    <property type="evidence" value="ECO:0000314"/>
    <property type="project" value="BHF-UCL"/>
</dbReference>
<dbReference type="GO" id="GO:0045944">
    <property type="term" value="P:positive regulation of transcription by RNA polymerase II"/>
    <property type="evidence" value="ECO:0000314"/>
    <property type="project" value="BHF-UCL"/>
</dbReference>
<dbReference type="GO" id="GO:0072659">
    <property type="term" value="P:protein localization to plasma membrane"/>
    <property type="evidence" value="ECO:0007669"/>
    <property type="project" value="Ensembl"/>
</dbReference>
<dbReference type="GO" id="GO:0050852">
    <property type="term" value="P:T cell receptor signaling pathway"/>
    <property type="evidence" value="ECO:0000315"/>
    <property type="project" value="UniProtKB"/>
</dbReference>
<dbReference type="CDD" id="cd13380">
    <property type="entry name" value="PH_Skap1"/>
    <property type="match status" value="1"/>
</dbReference>
<dbReference type="CDD" id="cd12044">
    <property type="entry name" value="SH3_SKAP1"/>
    <property type="match status" value="1"/>
</dbReference>
<dbReference type="FunFam" id="2.30.30.40:FF:000097">
    <property type="entry name" value="Putative src kinase-associated phosphoprotein 2"/>
    <property type="match status" value="1"/>
</dbReference>
<dbReference type="FunFam" id="2.30.29.30:FF:000277">
    <property type="entry name" value="src kinase-associated phosphoprotein 1"/>
    <property type="match status" value="1"/>
</dbReference>
<dbReference type="Gene3D" id="6.10.250.220">
    <property type="match status" value="1"/>
</dbReference>
<dbReference type="Gene3D" id="2.30.29.30">
    <property type="entry name" value="Pleckstrin-homology domain (PH domain)/Phosphotyrosine-binding domain (PTB)"/>
    <property type="match status" value="1"/>
</dbReference>
<dbReference type="Gene3D" id="2.30.30.40">
    <property type="entry name" value="SH3 Domains"/>
    <property type="match status" value="1"/>
</dbReference>
<dbReference type="InterPro" id="IPR011993">
    <property type="entry name" value="PH-like_dom_sf"/>
</dbReference>
<dbReference type="InterPro" id="IPR001849">
    <property type="entry name" value="PH_domain"/>
</dbReference>
<dbReference type="InterPro" id="IPR036028">
    <property type="entry name" value="SH3-like_dom_sf"/>
</dbReference>
<dbReference type="InterPro" id="IPR001452">
    <property type="entry name" value="SH3_domain"/>
</dbReference>
<dbReference type="InterPro" id="IPR035765">
    <property type="entry name" value="SKAP1_SH3"/>
</dbReference>
<dbReference type="InterPro" id="IPR037781">
    <property type="entry name" value="SKAP_fam"/>
</dbReference>
<dbReference type="PANTHER" id="PTHR15129:SF1">
    <property type="entry name" value="SRC KINASE-ASSOCIATED PHOSPHOPROTEIN 1"/>
    <property type="match status" value="1"/>
</dbReference>
<dbReference type="PANTHER" id="PTHR15129">
    <property type="entry name" value="SRC-ASSOCIATED ADAPTOR PROTEIN"/>
    <property type="match status" value="1"/>
</dbReference>
<dbReference type="Pfam" id="PF00169">
    <property type="entry name" value="PH"/>
    <property type="match status" value="1"/>
</dbReference>
<dbReference type="Pfam" id="PF14604">
    <property type="entry name" value="SH3_9"/>
    <property type="match status" value="1"/>
</dbReference>
<dbReference type="PRINTS" id="PR00452">
    <property type="entry name" value="SH3DOMAIN"/>
</dbReference>
<dbReference type="SMART" id="SM00233">
    <property type="entry name" value="PH"/>
    <property type="match status" value="1"/>
</dbReference>
<dbReference type="SMART" id="SM00326">
    <property type="entry name" value="SH3"/>
    <property type="match status" value="1"/>
</dbReference>
<dbReference type="SUPFAM" id="SSF50729">
    <property type="entry name" value="PH domain-like"/>
    <property type="match status" value="1"/>
</dbReference>
<dbReference type="SUPFAM" id="SSF50044">
    <property type="entry name" value="SH3-domain"/>
    <property type="match status" value="1"/>
</dbReference>
<dbReference type="PROSITE" id="PS50003">
    <property type="entry name" value="PH_DOMAIN"/>
    <property type="match status" value="1"/>
</dbReference>
<dbReference type="PROSITE" id="PS50002">
    <property type="entry name" value="SH3"/>
    <property type="match status" value="1"/>
</dbReference>